<keyword id="KW-0997">Cell inner membrane</keyword>
<keyword id="KW-1003">Cell membrane</keyword>
<keyword id="KW-0472">Membrane</keyword>
<keyword id="KW-1185">Reference proteome</keyword>
<keyword id="KW-0812">Transmembrane</keyword>
<keyword id="KW-1133">Transmembrane helix</keyword>
<keyword id="KW-0813">Transport</keyword>
<comment type="function">
    <text evidence="1">Part of the ABC transporter complex GsiABCD involved in glutathione import. Probably responsible for the translocation of the substrate across the membrane.</text>
</comment>
<comment type="subunit">
    <text evidence="1">The complex is composed of two ATP-binding proteins (GsiA), two transmembrane proteins (GsiC and GsiD) and a solute-binding protein (GsiB).</text>
</comment>
<comment type="subcellular location">
    <subcellularLocation>
        <location evidence="1">Cell inner membrane</location>
        <topology evidence="2">Multi-pass membrane protein</topology>
    </subcellularLocation>
</comment>
<comment type="similarity">
    <text evidence="4">Belongs to the binding-protein-dependent transport system permease family.</text>
</comment>
<feature type="chain" id="PRO_0000279990" description="Glutathione transport system permease protein GsiC">
    <location>
        <begin position="1"/>
        <end position="306"/>
    </location>
</feature>
<feature type="topological domain" description="Cytoplasmic" evidence="2">
    <location>
        <begin position="1"/>
        <end position="8"/>
    </location>
</feature>
<feature type="transmembrane region" description="Helical" evidence="3">
    <location>
        <begin position="9"/>
        <end position="29"/>
    </location>
</feature>
<feature type="topological domain" description="Periplasmic" evidence="2">
    <location>
        <begin position="30"/>
        <end position="102"/>
    </location>
</feature>
<feature type="transmembrane region" description="Helical" evidence="3">
    <location>
        <begin position="103"/>
        <end position="123"/>
    </location>
</feature>
<feature type="topological domain" description="Cytoplasmic" evidence="2">
    <location>
        <begin position="124"/>
        <end position="134"/>
    </location>
</feature>
<feature type="transmembrane region" description="Helical" evidence="3">
    <location>
        <begin position="135"/>
        <end position="155"/>
    </location>
</feature>
<feature type="topological domain" description="Periplasmic" evidence="2">
    <location>
        <begin position="156"/>
        <end position="168"/>
    </location>
</feature>
<feature type="transmembrane region" description="Helical" evidence="3">
    <location>
        <begin position="169"/>
        <end position="189"/>
    </location>
</feature>
<feature type="topological domain" description="Cytoplasmic" evidence="2">
    <location>
        <begin position="190"/>
        <end position="228"/>
    </location>
</feature>
<feature type="transmembrane region" description="Helical" evidence="3">
    <location>
        <begin position="229"/>
        <end position="249"/>
    </location>
</feature>
<feature type="topological domain" description="Periplasmic" evidence="2">
    <location>
        <begin position="250"/>
        <end position="277"/>
    </location>
</feature>
<feature type="transmembrane region" description="Helical" evidence="3">
    <location>
        <begin position="278"/>
        <end position="298"/>
    </location>
</feature>
<feature type="topological domain" description="Cytoplasmic" evidence="2">
    <location>
        <begin position="299"/>
        <end position="306"/>
    </location>
</feature>
<feature type="domain" description="ABC transmembrane type-1" evidence="3">
    <location>
        <begin position="95"/>
        <end position="292"/>
    </location>
</feature>
<accession>A1A970</accession>
<proteinExistence type="inferred from homology"/>
<evidence type="ECO:0000250" key="1">
    <source>
        <dbReference type="UniProtKB" id="P75798"/>
    </source>
</evidence>
<evidence type="ECO:0000255" key="2"/>
<evidence type="ECO:0000255" key="3">
    <source>
        <dbReference type="PROSITE-ProRule" id="PRU00441"/>
    </source>
</evidence>
<evidence type="ECO:0000305" key="4"/>
<protein>
    <recommendedName>
        <fullName evidence="1">Glutathione transport system permease protein GsiC</fullName>
    </recommendedName>
</protein>
<organism>
    <name type="scientific">Escherichia coli O1:K1 / APEC</name>
    <dbReference type="NCBI Taxonomy" id="405955"/>
    <lineage>
        <taxon>Bacteria</taxon>
        <taxon>Pseudomonadati</taxon>
        <taxon>Pseudomonadota</taxon>
        <taxon>Gammaproteobacteria</taxon>
        <taxon>Enterobacterales</taxon>
        <taxon>Enterobacteriaceae</taxon>
        <taxon>Escherichia</taxon>
    </lineage>
</organism>
<reference key="1">
    <citation type="journal article" date="2007" name="J. Bacteriol.">
        <title>The genome sequence of avian pathogenic Escherichia coli strain O1:K1:H7 shares strong similarities with human extraintestinal pathogenic E. coli genomes.</title>
        <authorList>
            <person name="Johnson T.J."/>
            <person name="Kariyawasam S."/>
            <person name="Wannemuehler Y."/>
            <person name="Mangiamele P."/>
            <person name="Johnson S.J."/>
            <person name="Doetkott C."/>
            <person name="Skyberg J.A."/>
            <person name="Lynne A.M."/>
            <person name="Johnson J.R."/>
            <person name="Nolan L.K."/>
        </authorList>
    </citation>
    <scope>NUCLEOTIDE SEQUENCE [LARGE SCALE GENOMIC DNA]</scope>
</reference>
<sequence length="306" mass="34066">MLNYVIKRLLGLIPTLFIVSVLVFLFVHMLPGDPARLIAGPEADAQVIELVRQQLGLDQPLYHQFWHYISNAVQGDFGLSMVSRRPVADEIASRFMPTLWLTITSMVWAVIFGMAAGIIAAVWRNRWPDRLSMTIAVSGISFPAFALGMLLIQVFSVELGWLPTVGADSWQHYILPSLTLGAAVAAVMARFTRASFVDVLSEDYMRTARAKGVSETWVVLKHGLRNAMIPVVTMMGLQFGFLLGGSIVVEKVFNWPGLGRLLVDSVEMRDYPVIQAEILLFSLEFILINLVVDVLYAAINPAIRYK</sequence>
<gene>
    <name evidence="1" type="primary">gsiC</name>
    <name type="ordered locus">Ecok1_07160</name>
    <name type="ORF">APECO1_1262</name>
</gene>
<name>GSIC_ECOK1</name>
<dbReference type="EMBL" id="CP000468">
    <property type="protein sequence ID" value="ABJ00210.1"/>
    <property type="molecule type" value="Genomic_DNA"/>
</dbReference>
<dbReference type="RefSeq" id="WP_000936043.1">
    <property type="nucleotide sequence ID" value="NZ_CADILS010000017.1"/>
</dbReference>
<dbReference type="SMR" id="A1A970"/>
<dbReference type="GeneID" id="86863342"/>
<dbReference type="KEGG" id="ecv:APECO1_1262"/>
<dbReference type="HOGENOM" id="CLU_036879_0_0_6"/>
<dbReference type="Proteomes" id="UP000008216">
    <property type="component" value="Chromosome"/>
</dbReference>
<dbReference type="GO" id="GO:0005886">
    <property type="term" value="C:plasma membrane"/>
    <property type="evidence" value="ECO:0007669"/>
    <property type="project" value="UniProtKB-SubCell"/>
</dbReference>
<dbReference type="GO" id="GO:0055085">
    <property type="term" value="P:transmembrane transport"/>
    <property type="evidence" value="ECO:0007669"/>
    <property type="project" value="InterPro"/>
</dbReference>
<dbReference type="CDD" id="cd06261">
    <property type="entry name" value="TM_PBP2"/>
    <property type="match status" value="1"/>
</dbReference>
<dbReference type="FunFam" id="1.10.3720.10:FF:000024">
    <property type="entry name" value="Glutathione ABC transporter permease GsiC"/>
    <property type="match status" value="1"/>
</dbReference>
<dbReference type="Gene3D" id="1.10.3720.10">
    <property type="entry name" value="MetI-like"/>
    <property type="match status" value="1"/>
</dbReference>
<dbReference type="InterPro" id="IPR045621">
    <property type="entry name" value="BPD_transp_1_N"/>
</dbReference>
<dbReference type="InterPro" id="IPR000515">
    <property type="entry name" value="MetI-like"/>
</dbReference>
<dbReference type="InterPro" id="IPR035906">
    <property type="entry name" value="MetI-like_sf"/>
</dbReference>
<dbReference type="NCBIfam" id="NF011661">
    <property type="entry name" value="PRK15081.1"/>
    <property type="match status" value="1"/>
</dbReference>
<dbReference type="PANTHER" id="PTHR43163">
    <property type="entry name" value="DIPEPTIDE TRANSPORT SYSTEM PERMEASE PROTEIN DPPB-RELATED"/>
    <property type="match status" value="1"/>
</dbReference>
<dbReference type="PANTHER" id="PTHR43163:SF5">
    <property type="entry name" value="GLUTATHIONE TRANSPORT SYSTEM PERMEASE PROTEIN GSIC"/>
    <property type="match status" value="1"/>
</dbReference>
<dbReference type="Pfam" id="PF00528">
    <property type="entry name" value="BPD_transp_1"/>
    <property type="match status" value="1"/>
</dbReference>
<dbReference type="Pfam" id="PF19300">
    <property type="entry name" value="BPD_transp_1_N"/>
    <property type="match status" value="1"/>
</dbReference>
<dbReference type="SUPFAM" id="SSF161098">
    <property type="entry name" value="MetI-like"/>
    <property type="match status" value="1"/>
</dbReference>
<dbReference type="PROSITE" id="PS50928">
    <property type="entry name" value="ABC_TM1"/>
    <property type="match status" value="1"/>
</dbReference>